<proteinExistence type="evidence at transcript level"/>
<feature type="chain" id="PRO_0000446404" description="Alcohol dehydrogenase 13">
    <location>
        <begin position="1"/>
        <end position="362"/>
    </location>
</feature>
<feature type="binding site" evidence="2">
    <location>
        <position position="51"/>
    </location>
    <ligand>
        <name>Zn(2+)</name>
        <dbReference type="ChEBI" id="CHEBI:29105"/>
        <label>1</label>
        <note>catalytic</note>
    </ligand>
</feature>
<feature type="binding site" evidence="1">
    <location>
        <position position="73"/>
    </location>
    <ligand>
        <name>substrate</name>
    </ligand>
</feature>
<feature type="binding site" evidence="2">
    <location>
        <position position="73"/>
    </location>
    <ligand>
        <name>Zn(2+)</name>
        <dbReference type="ChEBI" id="CHEBI:29105"/>
        <label>1</label>
        <note>catalytic</note>
    </ligand>
</feature>
<feature type="binding site" evidence="2">
    <location>
        <position position="104"/>
    </location>
    <ligand>
        <name>Zn(2+)</name>
        <dbReference type="ChEBI" id="CHEBI:29105"/>
        <label>2</label>
    </ligand>
</feature>
<feature type="binding site" evidence="2">
    <location>
        <position position="107"/>
    </location>
    <ligand>
        <name>Zn(2+)</name>
        <dbReference type="ChEBI" id="CHEBI:29105"/>
        <label>2</label>
    </ligand>
</feature>
<feature type="binding site" evidence="2">
    <location>
        <position position="110"/>
    </location>
    <ligand>
        <name>Zn(2+)</name>
        <dbReference type="ChEBI" id="CHEBI:29105"/>
        <label>2</label>
    </ligand>
</feature>
<feature type="binding site" evidence="2">
    <location>
        <position position="118"/>
    </location>
    <ligand>
        <name>Zn(2+)</name>
        <dbReference type="ChEBI" id="CHEBI:29105"/>
        <label>2</label>
    </ligand>
</feature>
<feature type="binding site" evidence="2">
    <location>
        <position position="168"/>
    </location>
    <ligand>
        <name>Zn(2+)</name>
        <dbReference type="ChEBI" id="CHEBI:29105"/>
        <label>1</label>
        <note>catalytic</note>
    </ligand>
</feature>
<feature type="binding site" evidence="2">
    <location>
        <begin position="193"/>
        <end position="198"/>
    </location>
    <ligand>
        <name>NAD(+)</name>
        <dbReference type="ChEBI" id="CHEBI:57540"/>
    </ligand>
</feature>
<feature type="binding site" evidence="1">
    <location>
        <begin position="280"/>
        <end position="282"/>
    </location>
    <ligand>
        <name>NAD(+)</name>
        <dbReference type="ChEBI" id="CHEBI:57540"/>
    </ligand>
</feature>
<name>ADH13_CATRO</name>
<accession>W8JCF0</accession>
<gene>
    <name evidence="3" type="primary">ADH13</name>
    <name evidence="4" type="synonym">CAD4</name>
    <name evidence="4" type="ORF">Caros016974</name>
</gene>
<dbReference type="EC" id="1.3.1.-" evidence="4"/>
<dbReference type="EMBL" id="KF302078">
    <property type="protein sequence ID" value="AHK60845.1"/>
    <property type="molecule type" value="mRNA"/>
</dbReference>
<dbReference type="SMR" id="W8JCF0"/>
<dbReference type="KEGG" id="ag:AHK60845"/>
<dbReference type="GO" id="GO:0016616">
    <property type="term" value="F:oxidoreductase activity, acting on the CH-OH group of donors, NAD or NADP as acceptor"/>
    <property type="evidence" value="ECO:0007669"/>
    <property type="project" value="InterPro"/>
</dbReference>
<dbReference type="GO" id="GO:0008270">
    <property type="term" value="F:zinc ion binding"/>
    <property type="evidence" value="ECO:0007669"/>
    <property type="project" value="InterPro"/>
</dbReference>
<dbReference type="GO" id="GO:0009820">
    <property type="term" value="P:alkaloid metabolic process"/>
    <property type="evidence" value="ECO:0007669"/>
    <property type="project" value="UniProtKB-ARBA"/>
</dbReference>
<dbReference type="CDD" id="cd05283">
    <property type="entry name" value="CAD1"/>
    <property type="match status" value="1"/>
</dbReference>
<dbReference type="FunFam" id="3.40.50.720:FF:000022">
    <property type="entry name" value="Cinnamyl alcohol dehydrogenase"/>
    <property type="match status" value="1"/>
</dbReference>
<dbReference type="Gene3D" id="3.90.180.10">
    <property type="entry name" value="Medium-chain alcohol dehydrogenases, catalytic domain"/>
    <property type="match status" value="1"/>
</dbReference>
<dbReference type="Gene3D" id="3.40.50.720">
    <property type="entry name" value="NAD(P)-binding Rossmann-like Domain"/>
    <property type="match status" value="1"/>
</dbReference>
<dbReference type="InterPro" id="IPR013149">
    <property type="entry name" value="ADH-like_C"/>
</dbReference>
<dbReference type="InterPro" id="IPR013154">
    <property type="entry name" value="ADH-like_N"/>
</dbReference>
<dbReference type="InterPro" id="IPR002328">
    <property type="entry name" value="ADH_Zn_CS"/>
</dbReference>
<dbReference type="InterPro" id="IPR047109">
    <property type="entry name" value="CAD-like"/>
</dbReference>
<dbReference type="InterPro" id="IPR011032">
    <property type="entry name" value="GroES-like_sf"/>
</dbReference>
<dbReference type="InterPro" id="IPR036291">
    <property type="entry name" value="NAD(P)-bd_dom_sf"/>
</dbReference>
<dbReference type="PANTHER" id="PTHR42683">
    <property type="entry name" value="ALDEHYDE REDUCTASE"/>
    <property type="match status" value="1"/>
</dbReference>
<dbReference type="Pfam" id="PF08240">
    <property type="entry name" value="ADH_N"/>
    <property type="match status" value="1"/>
</dbReference>
<dbReference type="Pfam" id="PF00107">
    <property type="entry name" value="ADH_zinc_N"/>
    <property type="match status" value="1"/>
</dbReference>
<dbReference type="SUPFAM" id="SSF50129">
    <property type="entry name" value="GroES-like"/>
    <property type="match status" value="1"/>
</dbReference>
<dbReference type="SUPFAM" id="SSF51735">
    <property type="entry name" value="NAD(P)-binding Rossmann-fold domains"/>
    <property type="match status" value="1"/>
</dbReference>
<dbReference type="PROSITE" id="PS00059">
    <property type="entry name" value="ADH_ZINC"/>
    <property type="match status" value="1"/>
</dbReference>
<comment type="cofactor">
    <cofactor evidence="2">
        <name>Zn(2+)</name>
        <dbReference type="ChEBI" id="CHEBI:29105"/>
    </cofactor>
    <text evidence="2">Binds 2 Zn(2+) ions per subunit.</text>
</comment>
<comment type="subunit">
    <text evidence="2">Homodimer.</text>
</comment>
<comment type="similarity">
    <text evidence="4">Belongs to the zinc-containing alcohol dehydrogenase family. Class-III subfamily.</text>
</comment>
<comment type="online information" name="ORCAE database">
    <link uri="https://orcae.psb.ugent.be/taxa/catro/regular/v1/"/>
</comment>
<organism>
    <name type="scientific">Catharanthus roseus</name>
    <name type="common">Madagascar periwinkle</name>
    <name type="synonym">Vinca rosea</name>
    <dbReference type="NCBI Taxonomy" id="4058"/>
    <lineage>
        <taxon>Eukaryota</taxon>
        <taxon>Viridiplantae</taxon>
        <taxon>Streptophyta</taxon>
        <taxon>Embryophyta</taxon>
        <taxon>Tracheophyta</taxon>
        <taxon>Spermatophyta</taxon>
        <taxon>Magnoliopsida</taxon>
        <taxon>eudicotyledons</taxon>
        <taxon>Gunneridae</taxon>
        <taxon>Pentapetalae</taxon>
        <taxon>asterids</taxon>
        <taxon>lamiids</taxon>
        <taxon>Gentianales</taxon>
        <taxon>Apocynaceae</taxon>
        <taxon>Rauvolfioideae</taxon>
        <taxon>Vinceae</taxon>
        <taxon>Catharanthinae</taxon>
        <taxon>Catharanthus</taxon>
    </lineage>
</organism>
<evidence type="ECO:0000250" key="1">
    <source>
        <dbReference type="UniProtKB" id="P00327"/>
    </source>
</evidence>
<evidence type="ECO:0000250" key="2">
    <source>
        <dbReference type="UniProtKB" id="P06525"/>
    </source>
</evidence>
<evidence type="ECO:0000303" key="3">
    <source>
    </source>
</evidence>
<evidence type="ECO:0000305" key="4"/>
<keyword id="KW-0479">Metal-binding</keyword>
<keyword id="KW-0520">NAD</keyword>
<keyword id="KW-0560">Oxidoreductase</keyword>
<keyword id="KW-0862">Zinc</keyword>
<sequence length="362" mass="39641">MAGETTKLDLSVKAIGWGAADASGVLQPIRFYRRAPGERDVKIRVLYCGVCNFDMEMVRNKWGFTRYPYVFGHETAGEVVEVGKKVEKFKVGDKVGVGCMVGSCGKCFHCQNEMENYCPEPNLADGSTYREEGERSYGGCSNVMVVDEKFVLRWPENLPQDKGVPLLCAGVVVYSPMKYMGFDKPGKHIGVFGLGGLGSIAVKFIKAFGGKATVISTSRRKEKEAIEEHGADAFVVNTDSEQLKALEGTMDGVVDTTPGGRTPMPLMLNLVKFDGAVILVGAPETLFELPLEPMGRKKIIGSSTGGLKEYQEVLDIAAKHNIVCDTEVIGIDYLSTAMERIKNLDVKYRFAIDIGNTLKFEE</sequence>
<protein>
    <recommendedName>
        <fullName evidence="3">Alcohol dehydrogenase 13</fullName>
        <shortName evidence="3">CrADH13</shortName>
        <ecNumber evidence="4">1.3.1.-</ecNumber>
    </recommendedName>
</protein>
<reference key="1">
    <citation type="journal article" date="2014" name="Nat. Commun.">
        <title>The seco-iridoid pathway from Catharanthus roseus.</title>
        <authorList>
            <person name="Miettinen K."/>
            <person name="Dong L."/>
            <person name="Navrot N."/>
            <person name="Schneider T."/>
            <person name="Burlat V."/>
            <person name="Pollier J."/>
            <person name="Woittiez L."/>
            <person name="van der Krol S."/>
            <person name="Lugan R."/>
            <person name="Ilc T."/>
            <person name="Verpoorte R."/>
            <person name="Oksman-Caldentey K.M."/>
            <person name="Martinoia E."/>
            <person name="Bouwmeester H."/>
            <person name="Goossens A."/>
            <person name="Memelink J."/>
            <person name="Werck-Reichhart D."/>
        </authorList>
    </citation>
    <scope>NUCLEOTIDE SEQUENCE [MRNA]</scope>
    <source>
        <strain>cv. Little Bright Eyes</strain>
    </source>
</reference>